<reference key="1">
    <citation type="journal article" date="2001" name="J. Bacteriol.">
        <title>Osmoregulated periplasmic glucan synthesis is required for Erwinia chrysanthemi pathogenicity.</title>
        <authorList>
            <person name="Page F."/>
            <person name="Altabe S."/>
            <person name="Hugouvieux-Cotte-Pattat N."/>
            <person name="Lacroix J.-M."/>
            <person name="Robert-Baudouy J."/>
            <person name="Bohin J.-P."/>
        </authorList>
    </citation>
    <scope>NUCLEOTIDE SEQUENCE [GENOMIC DNA]</scope>
    <scope>FUNCTION</scope>
    <source>
        <strain>3937</strain>
    </source>
</reference>
<reference key="2">
    <citation type="journal article" date="2011" name="J. Bacteriol.">
        <title>Genome sequence of the plant-pathogenic bacterium Dickeya dadantii 3937.</title>
        <authorList>
            <person name="Glasner J.D."/>
            <person name="Yang C.H."/>
            <person name="Reverchon S."/>
            <person name="Hugouvieux-Cotte-Pattat N."/>
            <person name="Condemine G."/>
            <person name="Bohin J.P."/>
            <person name="Van Gijsegem F."/>
            <person name="Yang S."/>
            <person name="Franza T."/>
            <person name="Expert D."/>
            <person name="Plunkett G. III"/>
            <person name="San Francisco M.J."/>
            <person name="Charkowski A.O."/>
            <person name="Py B."/>
            <person name="Bell K."/>
            <person name="Rauscher L."/>
            <person name="Rodriguez-Palenzuela P."/>
            <person name="Toussaint A."/>
            <person name="Holeva M.C."/>
            <person name="He S.Y."/>
            <person name="Douet V."/>
            <person name="Boccara M."/>
            <person name="Blanco C."/>
            <person name="Toth I."/>
            <person name="Anderson B.D."/>
            <person name="Biehl B.S."/>
            <person name="Mau B."/>
            <person name="Flynn S.M."/>
            <person name="Barras F."/>
            <person name="Lindeberg M."/>
            <person name="Birch P.R."/>
            <person name="Tsuyumu S."/>
            <person name="Shi X."/>
            <person name="Hibbing M."/>
            <person name="Yap M.N."/>
            <person name="Carpentier M."/>
            <person name="Dassa E."/>
            <person name="Umehara M."/>
            <person name="Kim J.F."/>
            <person name="Rusch M."/>
            <person name="Soni P."/>
            <person name="Mayhew G.F."/>
            <person name="Fouts D.E."/>
            <person name="Gill S.R."/>
            <person name="Blattner F.R."/>
            <person name="Keen N.T."/>
            <person name="Perna N.T."/>
        </authorList>
    </citation>
    <scope>NUCLEOTIDE SEQUENCE [LARGE SCALE GENOMIC DNA]</scope>
    <source>
        <strain>3937</strain>
    </source>
</reference>
<accession>Q9F496</accession>
<accession>E0SHS1</accession>
<keyword id="KW-0574">Periplasm</keyword>
<keyword id="KW-1185">Reference proteome</keyword>
<keyword id="KW-0732">Signal</keyword>
<organism>
    <name type="scientific">Dickeya dadantii (strain 3937)</name>
    <name type="common">Erwinia chrysanthemi (strain 3937)</name>
    <dbReference type="NCBI Taxonomy" id="198628"/>
    <lineage>
        <taxon>Bacteria</taxon>
        <taxon>Pseudomonadati</taxon>
        <taxon>Pseudomonadota</taxon>
        <taxon>Gammaproteobacteria</taxon>
        <taxon>Enterobacterales</taxon>
        <taxon>Pectobacteriaceae</taxon>
        <taxon>Dickeya</taxon>
    </lineage>
</organism>
<dbReference type="EMBL" id="AJ294718">
    <property type="protein sequence ID" value="CAC13110.1"/>
    <property type="molecule type" value="Genomic_DNA"/>
</dbReference>
<dbReference type="EMBL" id="CP002038">
    <property type="protein sequence ID" value="ADM99014.1"/>
    <property type="molecule type" value="Genomic_DNA"/>
</dbReference>
<dbReference type="RefSeq" id="WP_013318455.1">
    <property type="nucleotide sequence ID" value="NC_014500.1"/>
</dbReference>
<dbReference type="SMR" id="Q9F496"/>
<dbReference type="STRING" id="198628.Dda3937_03564"/>
<dbReference type="KEGG" id="ddd:Dda3937_03564"/>
<dbReference type="PATRIC" id="fig|198628.6.peg.2807"/>
<dbReference type="eggNOG" id="COG3131">
    <property type="taxonomic scope" value="Bacteria"/>
</dbReference>
<dbReference type="HOGENOM" id="CLU_023403_2_0_6"/>
<dbReference type="OrthoDB" id="335750at2"/>
<dbReference type="UniPathway" id="UPA00637"/>
<dbReference type="PHI-base" id="PHI:5564"/>
<dbReference type="PHI-base" id="PHI:8654"/>
<dbReference type="Proteomes" id="UP000006859">
    <property type="component" value="Chromosome"/>
</dbReference>
<dbReference type="GO" id="GO:0030288">
    <property type="term" value="C:outer membrane-bounded periplasmic space"/>
    <property type="evidence" value="ECO:0007669"/>
    <property type="project" value="TreeGrafter"/>
</dbReference>
<dbReference type="GO" id="GO:0030246">
    <property type="term" value="F:carbohydrate binding"/>
    <property type="evidence" value="ECO:0007669"/>
    <property type="project" value="InterPro"/>
</dbReference>
<dbReference type="GO" id="GO:0003824">
    <property type="term" value="F:catalytic activity"/>
    <property type="evidence" value="ECO:0007669"/>
    <property type="project" value="InterPro"/>
</dbReference>
<dbReference type="GO" id="GO:0051274">
    <property type="term" value="P:beta-glucan biosynthetic process"/>
    <property type="evidence" value="ECO:0007669"/>
    <property type="project" value="TreeGrafter"/>
</dbReference>
<dbReference type="FunFam" id="2.70.98.10:FF:000001">
    <property type="entry name" value="Glucans biosynthesis protein G"/>
    <property type="match status" value="1"/>
</dbReference>
<dbReference type="Gene3D" id="2.70.98.10">
    <property type="match status" value="1"/>
</dbReference>
<dbReference type="Gene3D" id="2.60.40.10">
    <property type="entry name" value="Immunoglobulins"/>
    <property type="match status" value="1"/>
</dbReference>
<dbReference type="HAMAP" id="MF_01069">
    <property type="entry name" value="MdoG_OpgG"/>
    <property type="match status" value="1"/>
</dbReference>
<dbReference type="InterPro" id="IPR011013">
    <property type="entry name" value="Gal_mutarotase_sf_dom"/>
</dbReference>
<dbReference type="InterPro" id="IPR014718">
    <property type="entry name" value="GH-type_carb-bd"/>
</dbReference>
<dbReference type="InterPro" id="IPR014438">
    <property type="entry name" value="Glucan_biosyn_MdoG/MdoD"/>
</dbReference>
<dbReference type="InterPro" id="IPR007444">
    <property type="entry name" value="Glucan_biosyn_MdoG_C"/>
</dbReference>
<dbReference type="InterPro" id="IPR013783">
    <property type="entry name" value="Ig-like_fold"/>
</dbReference>
<dbReference type="InterPro" id="IPR014756">
    <property type="entry name" value="Ig_E-set"/>
</dbReference>
<dbReference type="InterPro" id="IPR023704">
    <property type="entry name" value="MdoG_OpgG"/>
</dbReference>
<dbReference type="PANTHER" id="PTHR30504">
    <property type="entry name" value="GLUCANS BIOSYNTHESIS PROTEIN"/>
    <property type="match status" value="1"/>
</dbReference>
<dbReference type="PANTHER" id="PTHR30504:SF4">
    <property type="entry name" value="GLUCANS BIOSYNTHESIS PROTEIN G"/>
    <property type="match status" value="1"/>
</dbReference>
<dbReference type="Pfam" id="PF04349">
    <property type="entry name" value="MdoG"/>
    <property type="match status" value="1"/>
</dbReference>
<dbReference type="PIRSF" id="PIRSF006281">
    <property type="entry name" value="MdoG"/>
    <property type="match status" value="1"/>
</dbReference>
<dbReference type="SUPFAM" id="SSF81296">
    <property type="entry name" value="E set domains"/>
    <property type="match status" value="1"/>
</dbReference>
<dbReference type="SUPFAM" id="SSF74650">
    <property type="entry name" value="Galactose mutarotase-like"/>
    <property type="match status" value="1"/>
</dbReference>
<feature type="signal peptide" evidence="2">
    <location>
        <begin position="1"/>
        <end position="33"/>
    </location>
</feature>
<feature type="chain" id="PRO_0000020224" description="Glucans biosynthesis protein G">
    <location>
        <begin position="34"/>
        <end position="522"/>
    </location>
</feature>
<sequence length="522" mass="59152">MLVNKFRVKQRVANLRWVSAAVMLSLTSLHAWAFSIDDVAQKAEKLAEKGYEAPKSNLPAQFRDMKFADYQQIRFNQDKSYWNSDQTPFKLQFYHQGMYFDIPVKINEVTATEVNEIKYSTDYFNFGSVNHDPATVKDLGFAGFKVLYPINKADKHDEILSMLGASYFRVVGKGQVYGLSARGLAIDTALPSGEEFPRFREFWIEHPKPEDKHLVIYALLDSPRSVGAYRFVLYPGSDSMMDVEAKVYLRDKVGKLGVAPLTSMFLFGPNQPSPTLNYRPALHDSNGLSIHAGNGEWIWRPLNNPKHLAVSTYTIENPKGFGLLQRGRDFSGYEDLDDRYDLRPSGWIETKGDWGKGKVELVEIPTADETNDNIVAFWTPENLPEKGKPLEVKYRLHFTKDEEALHSPEQAYVMQTMRSTGDVKQSNLIRQPDGTTAFLVDFVGGKLKDLDPNTPIASQASIGDNGEIVENSVRYNPVTHGWRLTLRMKVKDNKQPTEMRAALVNGETTLTETWSYQLPANE</sequence>
<gene>
    <name type="primary">opgG</name>
    <name type="ordered locus">Dda3937_03564</name>
</gene>
<name>OPGG_DICD3</name>
<protein>
    <recommendedName>
        <fullName>Glucans biosynthesis protein G</fullName>
    </recommendedName>
</protein>
<evidence type="ECO:0000250" key="1"/>
<evidence type="ECO:0000255" key="2"/>
<evidence type="ECO:0000269" key="3">
    <source>
    </source>
</evidence>
<evidence type="ECO:0000305" key="4"/>
<proteinExistence type="inferred from homology"/>
<comment type="function">
    <text evidence="3">Involved in the biosynthesis of osmoregulated periplasmic glucans (OPGs). Seems to be required for pathogenicity.</text>
</comment>
<comment type="pathway">
    <text>Glycan metabolism; osmoregulated periplasmic glucan (OPG) biosynthesis.</text>
</comment>
<comment type="subcellular location">
    <subcellularLocation>
        <location evidence="1">Periplasm</location>
    </subcellularLocation>
</comment>
<comment type="similarity">
    <text evidence="4">Belongs to the OpgD/OpgG family.</text>
</comment>